<feature type="chain" id="PRO_0000443085" description="Casein kinase II subunit alpha'-interacting protein">
    <location>
        <begin position="1"/>
        <end position="734"/>
    </location>
</feature>
<feature type="region of interest" description="Disordered" evidence="2">
    <location>
        <begin position="608"/>
        <end position="654"/>
    </location>
</feature>
<feature type="compositionally biased region" description="Low complexity" evidence="2">
    <location>
        <begin position="612"/>
        <end position="654"/>
    </location>
</feature>
<keyword id="KW-0539">Nucleus</keyword>
<keyword id="KW-0597">Phosphoprotein</keyword>
<keyword id="KW-1267">Proteomics identification</keyword>
<keyword id="KW-1185">Reference proteome</keyword>
<evidence type="ECO:0000250" key="1">
    <source>
        <dbReference type="UniProtKB" id="Q8CH19"/>
    </source>
</evidence>
<evidence type="ECO:0000256" key="2">
    <source>
        <dbReference type="SAM" id="MobiDB-lite"/>
    </source>
</evidence>
<evidence type="ECO:0000305" key="3"/>
<evidence type="ECO:0000312" key="4">
    <source>
        <dbReference type="HGNC" id="HGNC:53637"/>
    </source>
</evidence>
<proteinExistence type="evidence at protein level"/>
<sequence length="734" mass="81798">MVPLAYYGQHFVPLDYFYQLSSANTLTHQHTGEKLNQFNNQPMAKVQSHSNHFAVPPLGSNKKVQRCSVLPSPKSQDKISQSFCDRFLNSPLFHAKHQNTPSIGLHWRSSLWPAQRALNSHLLHSKAQTTSSSDLNMTSSLELNQAALSLQLPFCKPQTTSSSLDVCWRSLSLKSHQRVSSSSLFRLQNQEIPSINIIWTSSSLGPKRKALSSTLLQSKPQKTSSLDYLWTSSLQRNQRSLSSPSLNTKLQTSDLFWTSPSFKPNQIALTSPLLDSRLQKTPILNSNPTIGGLPVSHSKARQSASSYFVHPSENLPLFQLNSQSMFMLDCNFQTTNSPVCHSKFQNTTSPNGKHRVTHLPSPHPKTNISGQLLSSSKHCTRNTAASTLGFRLQSKSSFQFSPKTESNKEIPWTLKYSQPCIVKGGTVPDDVVNKIVNSISNTRIQRDLCRQILFRRMRGRPNPHPGPRLSSNYVVCLACASCLKSPCNHLRGKKNPHCATLSVIPTPEANSEGKIEVKLVLILSLPETFSSCLPFPMKENQPNEVPEDNLEGVEKIQQFFPTSERDIQGLNMKQIWWAVAPENKVIGQQPQAIDWLFYVKKNNSQPQSLLPSTSSSTSSSSTTSSSSSVASASSDSSSSSSSSSSFSISSSSSPSKEFMTLTLSRPVFRKVLSYHRLPAGVSWLEFIYSKDYQLHPRKPNRSQSSSLKTKPVRNNNTVKWRKGANTLFKFFRTK</sequence>
<name>CS2IP_HUMAN</name>
<dbReference type="EMBL" id="AC108750">
    <property type="status" value="NOT_ANNOTATED_CDS"/>
    <property type="molecule type" value="Genomic_DNA"/>
</dbReference>
<dbReference type="EMBL" id="AC126475">
    <property type="status" value="NOT_ANNOTATED_CDS"/>
    <property type="molecule type" value="Genomic_DNA"/>
</dbReference>
<dbReference type="CCDS" id="CCDS93323.1"/>
<dbReference type="RefSeq" id="NP_001355094.1">
    <property type="nucleotide sequence ID" value="NM_001368165.1"/>
</dbReference>
<dbReference type="RefSeq" id="NP_001355095.1">
    <property type="nucleotide sequence ID" value="NM_001368166.1"/>
</dbReference>
<dbReference type="RefSeq" id="NP_001355096.1">
    <property type="nucleotide sequence ID" value="NM_001368167.1"/>
</dbReference>
<dbReference type="RefSeq" id="NP_001355097.1">
    <property type="nucleotide sequence ID" value="NM_001368168.1"/>
</dbReference>
<dbReference type="SMR" id="A0A1B0GTH6"/>
<dbReference type="STRING" id="9606.ENSP00000489704"/>
<dbReference type="PhosphoSitePlus" id="A0A1B0GTH6"/>
<dbReference type="BioMuta" id="ENSG00000283434"/>
<dbReference type="jPOST" id="A0A1B0GTH6"/>
<dbReference type="MassIVE" id="A0A1B0GTH6"/>
<dbReference type="PeptideAtlas" id="A0A1B0GTH6"/>
<dbReference type="Ensembl" id="ENST00000637986.2">
    <property type="protein sequence ID" value="ENSP00000489704.1"/>
    <property type="gene ID" value="ENSG00000283434.2"/>
</dbReference>
<dbReference type="GeneID" id="111064647"/>
<dbReference type="MANE-Select" id="ENST00000637986.2">
    <property type="protein sequence ID" value="ENSP00000489704.1"/>
    <property type="RefSeq nucleotide sequence ID" value="NM_001368165.1"/>
    <property type="RefSeq protein sequence ID" value="NP_001355094.1"/>
</dbReference>
<dbReference type="AGR" id="HGNC:53637"/>
<dbReference type="GeneCards" id="CSNK2A2IP"/>
<dbReference type="HGNC" id="HGNC:53637">
    <property type="gene designation" value="CSNK2A2IP"/>
</dbReference>
<dbReference type="HPA" id="ENSG00000283434">
    <property type="expression patterns" value="Tissue enriched (testis)"/>
</dbReference>
<dbReference type="neXtProt" id="NX_A0A1B0GTH6"/>
<dbReference type="OpenTargets" id="ENSG00000283434"/>
<dbReference type="VEuPathDB" id="HostDB:ENSG00000283434"/>
<dbReference type="GeneTree" id="ENSGT00390000012239"/>
<dbReference type="InParanoid" id="A0A1B0GTH6"/>
<dbReference type="OMA" id="CHSKFQN"/>
<dbReference type="OrthoDB" id="9526609at2759"/>
<dbReference type="PAN-GO" id="A0A1B0GTH6">
    <property type="GO annotations" value="0 GO annotations based on evolutionary models"/>
</dbReference>
<dbReference type="Pharos" id="A0A1B0GTH6">
    <property type="development level" value="Tdark"/>
</dbReference>
<dbReference type="PRO" id="PR:A0A1B0GTH6"/>
<dbReference type="Proteomes" id="UP000005640">
    <property type="component" value="Chromosome 3"/>
</dbReference>
<dbReference type="RNAct" id="A0A1B0GTH6">
    <property type="molecule type" value="protein"/>
</dbReference>
<dbReference type="Bgee" id="ENSG00000283434">
    <property type="expression patterns" value="Expressed in male germ line stem cell (sensu Vertebrata) in testis and 44 other cell types or tissues"/>
</dbReference>
<dbReference type="GO" id="GO:0005634">
    <property type="term" value="C:nucleus"/>
    <property type="evidence" value="ECO:0007669"/>
    <property type="project" value="UniProtKB-SubCell"/>
</dbReference>
<dbReference type="InterPro" id="IPR038954">
    <property type="entry name" value="CSNKA2IP"/>
</dbReference>
<dbReference type="PANTHER" id="PTHR35825">
    <property type="entry name" value="CASEIN KINASE II SUBUNIT ALPHA PRIME-INTERACTING PROTEIN"/>
    <property type="match status" value="1"/>
</dbReference>
<dbReference type="PANTHER" id="PTHR35825:SF2">
    <property type="entry name" value="CASEIN KINASE II SUBUNIT ALPHA'-INTERACTING PROTEIN"/>
    <property type="match status" value="1"/>
</dbReference>
<gene>
    <name evidence="4" type="primary">CSNK2A2IP</name>
    <name type="synonym">CSNKA2IP</name>
</gene>
<reference key="1">
    <citation type="journal article" date="2006" name="Nature">
        <title>The DNA sequence, annotation and analysis of human chromosome 3.</title>
        <authorList>
            <person name="Muzny D.M."/>
            <person name="Scherer S.E."/>
            <person name="Kaul R."/>
            <person name="Wang J."/>
            <person name="Yu J."/>
            <person name="Sudbrak R."/>
            <person name="Buhay C.J."/>
            <person name="Chen R."/>
            <person name="Cree A."/>
            <person name="Ding Y."/>
            <person name="Dugan-Rocha S."/>
            <person name="Gill R."/>
            <person name="Gunaratne P."/>
            <person name="Harris R.A."/>
            <person name="Hawes A.C."/>
            <person name="Hernandez J."/>
            <person name="Hodgson A.V."/>
            <person name="Hume J."/>
            <person name="Jackson A."/>
            <person name="Khan Z.M."/>
            <person name="Kovar-Smith C."/>
            <person name="Lewis L.R."/>
            <person name="Lozado R.J."/>
            <person name="Metzker M.L."/>
            <person name="Milosavljevic A."/>
            <person name="Miner G.R."/>
            <person name="Morgan M.B."/>
            <person name="Nazareth L.V."/>
            <person name="Scott G."/>
            <person name="Sodergren E."/>
            <person name="Song X.-Z."/>
            <person name="Steffen D."/>
            <person name="Wei S."/>
            <person name="Wheeler D.A."/>
            <person name="Wright M.W."/>
            <person name="Worley K.C."/>
            <person name="Yuan Y."/>
            <person name="Zhang Z."/>
            <person name="Adams C.Q."/>
            <person name="Ansari-Lari M.A."/>
            <person name="Ayele M."/>
            <person name="Brown M.J."/>
            <person name="Chen G."/>
            <person name="Chen Z."/>
            <person name="Clendenning J."/>
            <person name="Clerc-Blankenburg K.P."/>
            <person name="Chen R."/>
            <person name="Chen Z."/>
            <person name="Davis C."/>
            <person name="Delgado O."/>
            <person name="Dinh H.H."/>
            <person name="Dong W."/>
            <person name="Draper H."/>
            <person name="Ernst S."/>
            <person name="Fu G."/>
            <person name="Gonzalez-Garay M.L."/>
            <person name="Garcia D.K."/>
            <person name="Gillett W."/>
            <person name="Gu J."/>
            <person name="Hao B."/>
            <person name="Haugen E."/>
            <person name="Havlak P."/>
            <person name="He X."/>
            <person name="Hennig S."/>
            <person name="Hu S."/>
            <person name="Huang W."/>
            <person name="Jackson L.R."/>
            <person name="Jacob L.S."/>
            <person name="Kelly S.H."/>
            <person name="Kube M."/>
            <person name="Levy R."/>
            <person name="Li Z."/>
            <person name="Liu B."/>
            <person name="Liu J."/>
            <person name="Liu W."/>
            <person name="Lu J."/>
            <person name="Maheshwari M."/>
            <person name="Nguyen B.-V."/>
            <person name="Okwuonu G.O."/>
            <person name="Palmeiri A."/>
            <person name="Pasternak S."/>
            <person name="Perez L.M."/>
            <person name="Phelps K.A."/>
            <person name="Plopper F.J."/>
            <person name="Qiang B."/>
            <person name="Raymond C."/>
            <person name="Rodriguez R."/>
            <person name="Saenphimmachak C."/>
            <person name="Santibanez J."/>
            <person name="Shen H."/>
            <person name="Shen Y."/>
            <person name="Subramanian S."/>
            <person name="Tabor P.E."/>
            <person name="Verduzco D."/>
            <person name="Waldron L."/>
            <person name="Wang J."/>
            <person name="Wang J."/>
            <person name="Wang Q."/>
            <person name="Williams G.A."/>
            <person name="Wong G.K.-S."/>
            <person name="Yao Z."/>
            <person name="Zhang J."/>
            <person name="Zhang X."/>
            <person name="Zhao G."/>
            <person name="Zhou J."/>
            <person name="Zhou Y."/>
            <person name="Nelson D."/>
            <person name="Lehrach H."/>
            <person name="Reinhardt R."/>
            <person name="Naylor S.L."/>
            <person name="Yang H."/>
            <person name="Olson M."/>
            <person name="Weinstock G."/>
            <person name="Gibbs R.A."/>
        </authorList>
    </citation>
    <scope>NUCLEOTIDE SEQUENCE [LARGE SCALE GENOMIC DNA]</scope>
</reference>
<organism>
    <name type="scientific">Homo sapiens</name>
    <name type="common">Human</name>
    <dbReference type="NCBI Taxonomy" id="9606"/>
    <lineage>
        <taxon>Eukaryota</taxon>
        <taxon>Metazoa</taxon>
        <taxon>Chordata</taxon>
        <taxon>Craniata</taxon>
        <taxon>Vertebrata</taxon>
        <taxon>Euteleostomi</taxon>
        <taxon>Mammalia</taxon>
        <taxon>Eutheria</taxon>
        <taxon>Euarchontoglires</taxon>
        <taxon>Primates</taxon>
        <taxon>Haplorrhini</taxon>
        <taxon>Catarrhini</taxon>
        <taxon>Hominidae</taxon>
        <taxon>Homo</taxon>
    </lineage>
</organism>
<protein>
    <recommendedName>
        <fullName evidence="3">Casein kinase II subunit alpha'-interacting protein</fullName>
    </recommendedName>
    <alternativeName>
        <fullName evidence="4">Casein kinase 2 alpha prime interacting protein</fullName>
    </alternativeName>
</protein>
<accession>A0A1B0GTH6</accession>
<comment type="function">
    <text evidence="1">May play a role in chromatin regulation of male germ cells.</text>
</comment>
<comment type="subunit">
    <text evidence="1">Interacts (via C-terminus) with CSNK2A2.</text>
</comment>
<comment type="subcellular location">
    <subcellularLocation>
        <location evidence="1">Nucleus</location>
    </subcellularLocation>
    <text evidence="1">Present in nuclei of spermatids during chromatin condensation.</text>
</comment>
<comment type="PTM">
    <text evidence="1">Phosphorylated by CK2 (casein kinase II), specifically by complexes containing catalytic subunit CSNK2A2.</text>
</comment>